<organism>
    <name type="scientific">Bradyrhizobium sp. (strain BTAi1 / ATCC BAA-1182)</name>
    <dbReference type="NCBI Taxonomy" id="288000"/>
    <lineage>
        <taxon>Bacteria</taxon>
        <taxon>Pseudomonadati</taxon>
        <taxon>Pseudomonadota</taxon>
        <taxon>Alphaproteobacteria</taxon>
        <taxon>Hyphomicrobiales</taxon>
        <taxon>Nitrobacteraceae</taxon>
        <taxon>Bradyrhizobium</taxon>
    </lineage>
</organism>
<reference key="1">
    <citation type="journal article" date="2007" name="Science">
        <title>Legumes symbioses: absence of nod genes in photosynthetic bradyrhizobia.</title>
        <authorList>
            <person name="Giraud E."/>
            <person name="Moulin L."/>
            <person name="Vallenet D."/>
            <person name="Barbe V."/>
            <person name="Cytryn E."/>
            <person name="Avarre J.-C."/>
            <person name="Jaubert M."/>
            <person name="Simon D."/>
            <person name="Cartieaux F."/>
            <person name="Prin Y."/>
            <person name="Bena G."/>
            <person name="Hannibal L."/>
            <person name="Fardoux J."/>
            <person name="Kojadinovic M."/>
            <person name="Vuillet L."/>
            <person name="Lajus A."/>
            <person name="Cruveiller S."/>
            <person name="Rouy Z."/>
            <person name="Mangenot S."/>
            <person name="Segurens B."/>
            <person name="Dossat C."/>
            <person name="Franck W.L."/>
            <person name="Chang W.-S."/>
            <person name="Saunders E."/>
            <person name="Bruce D."/>
            <person name="Richardson P."/>
            <person name="Normand P."/>
            <person name="Dreyfus B."/>
            <person name="Pignol D."/>
            <person name="Stacey G."/>
            <person name="Emerich D."/>
            <person name="Vermeglio A."/>
            <person name="Medigue C."/>
            <person name="Sadowsky M."/>
        </authorList>
    </citation>
    <scope>NUCLEOTIDE SEQUENCE [LARGE SCALE GENOMIC DNA]</scope>
    <source>
        <strain>BTAi1 / ATCC BAA-1182</strain>
    </source>
</reference>
<sequence length="288" mass="30237">MTFRARREVLRTILTGERCIHPGSVYDAISIRIAEDLGFELGMFGGSAASLAVLGDPDIALITLTELADQMRRMSRAATLPVLVDADHGYGNAMNVRRTVQELEAAGAAGLTIEDTLLPQAFGAAKPQLISLAEGIGKVKAALEGRGDPALVILGRTGAVSVTSLDDAIARARAYEACGVDGLFFTGITARDQLDAIAAATTLPIVLGGAPEHMSDLGYLAARRVRVALQGHAPIAAATQAVYETLKALRGGAAPKQLKGLPSAELTAQVMREAEVKRRLRVYLEPGS</sequence>
<gene>
    <name type="ordered locus">BBta_4901</name>
</gene>
<accession>A5EL79</accession>
<dbReference type="EC" id="4.1.1.112" evidence="1"/>
<dbReference type="EMBL" id="CP000494">
    <property type="protein sequence ID" value="ABQ36923.1"/>
    <property type="molecule type" value="Genomic_DNA"/>
</dbReference>
<dbReference type="RefSeq" id="WP_012044906.1">
    <property type="nucleotide sequence ID" value="NC_009485.1"/>
</dbReference>
<dbReference type="SMR" id="A5EL79"/>
<dbReference type="STRING" id="288000.BBta_4901"/>
<dbReference type="KEGG" id="bbt:BBta_4901"/>
<dbReference type="eggNOG" id="COG2513">
    <property type="taxonomic scope" value="Bacteria"/>
</dbReference>
<dbReference type="HOGENOM" id="CLU_027389_3_2_5"/>
<dbReference type="OrthoDB" id="9771433at2"/>
<dbReference type="Proteomes" id="UP000000246">
    <property type="component" value="Chromosome"/>
</dbReference>
<dbReference type="GO" id="GO:0000287">
    <property type="term" value="F:magnesium ion binding"/>
    <property type="evidence" value="ECO:0007669"/>
    <property type="project" value="UniProtKB-UniRule"/>
</dbReference>
<dbReference type="GO" id="GO:0046421">
    <property type="term" value="F:methylisocitrate lyase activity"/>
    <property type="evidence" value="ECO:0007669"/>
    <property type="project" value="TreeGrafter"/>
</dbReference>
<dbReference type="GO" id="GO:0008948">
    <property type="term" value="F:oxaloacetate decarboxylase activity"/>
    <property type="evidence" value="ECO:0007669"/>
    <property type="project" value="UniProtKB-UniRule"/>
</dbReference>
<dbReference type="GO" id="GO:0006107">
    <property type="term" value="P:oxaloacetate metabolic process"/>
    <property type="evidence" value="ECO:0007669"/>
    <property type="project" value="UniProtKB-UniRule"/>
</dbReference>
<dbReference type="GO" id="GO:0019629">
    <property type="term" value="P:propionate catabolic process, 2-methylcitrate cycle"/>
    <property type="evidence" value="ECO:0007669"/>
    <property type="project" value="TreeGrafter"/>
</dbReference>
<dbReference type="GO" id="GO:0042866">
    <property type="term" value="P:pyruvate biosynthetic process"/>
    <property type="evidence" value="ECO:0007669"/>
    <property type="project" value="UniProtKB-UniRule"/>
</dbReference>
<dbReference type="CDD" id="cd00377">
    <property type="entry name" value="ICL_PEPM"/>
    <property type="match status" value="1"/>
</dbReference>
<dbReference type="Gene3D" id="3.20.20.60">
    <property type="entry name" value="Phosphoenolpyruvate-binding domains"/>
    <property type="match status" value="1"/>
</dbReference>
<dbReference type="HAMAP" id="MF_01299">
    <property type="entry name" value="OadC"/>
    <property type="match status" value="1"/>
</dbReference>
<dbReference type="InterPro" id="IPR039556">
    <property type="entry name" value="ICL/PEPM"/>
</dbReference>
<dbReference type="InterPro" id="IPR023687">
    <property type="entry name" value="Oxaloacetate_deCOase_bac"/>
</dbReference>
<dbReference type="InterPro" id="IPR015813">
    <property type="entry name" value="Pyrv/PenolPyrv_kinase-like_dom"/>
</dbReference>
<dbReference type="InterPro" id="IPR040442">
    <property type="entry name" value="Pyrv_kinase-like_dom_sf"/>
</dbReference>
<dbReference type="PANTHER" id="PTHR42905:SF3">
    <property type="entry name" value="OXALOACETATE DECARBOXYLASE"/>
    <property type="match status" value="1"/>
</dbReference>
<dbReference type="PANTHER" id="PTHR42905">
    <property type="entry name" value="PHOSPHOENOLPYRUVATE CARBOXYLASE"/>
    <property type="match status" value="1"/>
</dbReference>
<dbReference type="Pfam" id="PF13714">
    <property type="entry name" value="PEP_mutase"/>
    <property type="match status" value="1"/>
</dbReference>
<dbReference type="SUPFAM" id="SSF51621">
    <property type="entry name" value="Phosphoenolpyruvate/pyruvate domain"/>
    <property type="match status" value="1"/>
</dbReference>
<evidence type="ECO:0000255" key="1">
    <source>
        <dbReference type="HAMAP-Rule" id="MF_01299"/>
    </source>
</evidence>
<evidence type="ECO:0000305" key="2"/>
<comment type="function">
    <text evidence="1">Catalyzes the decarboxylation of oxaloacetate into pyruvate. Seems to play a role in maintaining cellular concentrations of bicarbonate and pyruvate.</text>
</comment>
<comment type="catalytic activity">
    <reaction evidence="1">
        <text>oxaloacetate + H(+) = pyruvate + CO2</text>
        <dbReference type="Rhea" id="RHEA:15641"/>
        <dbReference type="ChEBI" id="CHEBI:15361"/>
        <dbReference type="ChEBI" id="CHEBI:15378"/>
        <dbReference type="ChEBI" id="CHEBI:16452"/>
        <dbReference type="ChEBI" id="CHEBI:16526"/>
        <dbReference type="EC" id="4.1.1.112"/>
    </reaction>
</comment>
<comment type="cofactor">
    <cofactor evidence="1">
        <name>Mg(2+)</name>
        <dbReference type="ChEBI" id="CHEBI:18420"/>
    </cofactor>
    <text evidence="1">Binds 1 Mg(2+) ion per subunit.</text>
</comment>
<comment type="subunit">
    <text evidence="1">Homotetramer; dimer of dimers.</text>
</comment>
<comment type="similarity">
    <text evidence="2">Belongs to the isocitrate lyase/PEP mutase superfamily. Oxaloacetate decarboxylase family.</text>
</comment>
<proteinExistence type="inferred from homology"/>
<protein>
    <recommendedName>
        <fullName evidence="1">Oxaloacetate decarboxylase</fullName>
        <ecNumber evidence="1">4.1.1.112</ecNumber>
    </recommendedName>
</protein>
<name>OADC_BRASB</name>
<keyword id="KW-0210">Decarboxylase</keyword>
<keyword id="KW-0456">Lyase</keyword>
<keyword id="KW-0460">Magnesium</keyword>
<keyword id="KW-0479">Metal-binding</keyword>
<keyword id="KW-1185">Reference proteome</keyword>
<feature type="chain" id="PRO_0000364053" description="Oxaloacetate decarboxylase">
    <location>
        <begin position="1"/>
        <end position="288"/>
    </location>
</feature>
<feature type="binding site" evidence="1">
    <location>
        <position position="47"/>
    </location>
    <ligand>
        <name>substrate</name>
    </ligand>
</feature>
<feature type="binding site" evidence="1">
    <location>
        <position position="85"/>
    </location>
    <ligand>
        <name>Mg(2+)</name>
        <dbReference type="ChEBI" id="CHEBI:18420"/>
    </ligand>
</feature>
<feature type="binding site" evidence="1">
    <location>
        <position position="156"/>
    </location>
    <ligand>
        <name>substrate</name>
    </ligand>
</feature>
<feature type="binding site" evidence="1">
    <location>
        <position position="232"/>
    </location>
    <ligand>
        <name>substrate</name>
    </ligand>
</feature>